<evidence type="ECO:0000255" key="1">
    <source>
        <dbReference type="HAMAP-Rule" id="MF_01255"/>
    </source>
</evidence>
<protein>
    <recommendedName>
        <fullName evidence="1">L-ectoine synthase</fullName>
        <ecNumber evidence="1">4.2.1.108</ecNumber>
    </recommendedName>
    <alternativeName>
        <fullName evidence="1">N-acetyldiaminobutyrate dehydratase</fullName>
    </alternativeName>
</protein>
<feature type="chain" id="PRO_1000067242" description="L-ectoine synthase">
    <location>
        <begin position="1"/>
        <end position="128"/>
    </location>
</feature>
<name>ECTC_VIBC1</name>
<sequence length="128" mass="14746">MIVRTLDECRNSERRVVSDNWESVRMLLKDDNMGFSFHITTIYEGTETHIHYQNHLESVFCMSGEGEIEVVGGETYPIKPGTLYILDKNDEHYLRAYKNKEMVMACVFNPPITGAEVHDENGVYPLVD</sequence>
<accession>A7MVY7</accession>
<comment type="function">
    <text evidence="1">Catalyzes the circularization of gamma-N-acetyl-alpha,gamma-diaminobutyric acid (ADABA) to ectoine (1,4,5,6-tetrahydro-2-methyl-4-pyrimidine carboxylic acid), which is an excellent osmoprotectant.</text>
</comment>
<comment type="catalytic activity">
    <reaction evidence="1">
        <text>(2S)-4-acetamido-2-aminobutanoate = L-ectoine + H2O</text>
        <dbReference type="Rhea" id="RHEA:17281"/>
        <dbReference type="ChEBI" id="CHEBI:15377"/>
        <dbReference type="ChEBI" id="CHEBI:58515"/>
        <dbReference type="ChEBI" id="CHEBI:58929"/>
        <dbReference type="EC" id="4.2.1.108"/>
    </reaction>
</comment>
<comment type="pathway">
    <text evidence="1">Amine and polyamine biosynthesis; ectoine biosynthesis; L-ectoine from L-aspartate 4-semialdehyde: step 3/3.</text>
</comment>
<comment type="similarity">
    <text evidence="1">Belongs to the ectoine synthase family.</text>
</comment>
<gene>
    <name evidence="1" type="primary">ectC</name>
    <name type="ordered locus">VIBHAR_02452</name>
</gene>
<keyword id="KW-0456">Lyase</keyword>
<proteinExistence type="inferred from homology"/>
<organism>
    <name type="scientific">Vibrio campbellii (strain ATCC BAA-1116)</name>
    <dbReference type="NCBI Taxonomy" id="2902295"/>
    <lineage>
        <taxon>Bacteria</taxon>
        <taxon>Pseudomonadati</taxon>
        <taxon>Pseudomonadota</taxon>
        <taxon>Gammaproteobacteria</taxon>
        <taxon>Vibrionales</taxon>
        <taxon>Vibrionaceae</taxon>
        <taxon>Vibrio</taxon>
    </lineage>
</organism>
<dbReference type="EC" id="4.2.1.108" evidence="1"/>
<dbReference type="EMBL" id="CP000789">
    <property type="protein sequence ID" value="ABU71414.1"/>
    <property type="molecule type" value="Genomic_DNA"/>
</dbReference>
<dbReference type="RefSeq" id="WP_012128096.1">
    <property type="nucleotide sequence ID" value="NC_022269.1"/>
</dbReference>
<dbReference type="SMR" id="A7MVY7"/>
<dbReference type="KEGG" id="vha:VIBHAR_02452"/>
<dbReference type="PATRIC" id="fig|338187.25.peg.249"/>
<dbReference type="UniPathway" id="UPA00067">
    <property type="reaction ID" value="UER00123"/>
</dbReference>
<dbReference type="Proteomes" id="UP000008152">
    <property type="component" value="Chromosome I"/>
</dbReference>
<dbReference type="GO" id="GO:0033990">
    <property type="term" value="F:ectoine synthase activity"/>
    <property type="evidence" value="ECO:0007669"/>
    <property type="project" value="UniProtKB-EC"/>
</dbReference>
<dbReference type="GO" id="GO:0019491">
    <property type="term" value="P:ectoine biosynthetic process"/>
    <property type="evidence" value="ECO:0007669"/>
    <property type="project" value="UniProtKB-UniRule"/>
</dbReference>
<dbReference type="CDD" id="cd06978">
    <property type="entry name" value="cupin_EctC"/>
    <property type="match status" value="1"/>
</dbReference>
<dbReference type="Gene3D" id="2.60.120.10">
    <property type="entry name" value="Jelly Rolls"/>
    <property type="match status" value="1"/>
</dbReference>
<dbReference type="HAMAP" id="MF_01255">
    <property type="entry name" value="Ectoine_synth"/>
    <property type="match status" value="1"/>
</dbReference>
<dbReference type="InterPro" id="IPR010462">
    <property type="entry name" value="Ectoine_synth"/>
</dbReference>
<dbReference type="InterPro" id="IPR014710">
    <property type="entry name" value="RmlC-like_jellyroll"/>
</dbReference>
<dbReference type="InterPro" id="IPR011051">
    <property type="entry name" value="RmlC_Cupin_sf"/>
</dbReference>
<dbReference type="NCBIfam" id="NF009806">
    <property type="entry name" value="PRK13290.1"/>
    <property type="match status" value="1"/>
</dbReference>
<dbReference type="PANTHER" id="PTHR39289">
    <property type="match status" value="1"/>
</dbReference>
<dbReference type="PANTHER" id="PTHR39289:SF1">
    <property type="entry name" value="L-ECTOINE SYNTHASE"/>
    <property type="match status" value="1"/>
</dbReference>
<dbReference type="Pfam" id="PF06339">
    <property type="entry name" value="Ectoine_synth"/>
    <property type="match status" value="1"/>
</dbReference>
<dbReference type="SUPFAM" id="SSF51182">
    <property type="entry name" value="RmlC-like cupins"/>
    <property type="match status" value="1"/>
</dbReference>
<reference key="1">
    <citation type="submission" date="2007-08" db="EMBL/GenBank/DDBJ databases">
        <authorList>
            <consortium name="The Vibrio harveyi Genome Sequencing Project"/>
            <person name="Bassler B."/>
            <person name="Clifton S.W."/>
            <person name="Fulton L."/>
            <person name="Delehaunty K."/>
            <person name="Fronick C."/>
            <person name="Harrison M."/>
            <person name="Markivic C."/>
            <person name="Fulton R."/>
            <person name="Tin-Wollam A.-M."/>
            <person name="Shah N."/>
            <person name="Pepin K."/>
            <person name="Nash W."/>
            <person name="Thiruvilangam P."/>
            <person name="Bhonagiri V."/>
            <person name="Waters C."/>
            <person name="Tu K.C."/>
            <person name="Irgon J."/>
            <person name="Wilson R.K."/>
        </authorList>
    </citation>
    <scope>NUCLEOTIDE SEQUENCE [LARGE SCALE GENOMIC DNA]</scope>
    <source>
        <strain>ATCC BAA-1116 / BB120</strain>
    </source>
</reference>